<protein>
    <recommendedName>
        <fullName evidence="1">Tyrosine recombinase XerC</fullName>
    </recommendedName>
</protein>
<accession>Q1QSU9</accession>
<gene>
    <name evidence="1" type="primary">xerC</name>
    <name type="ordered locus">Csal_3115</name>
</gene>
<feature type="chain" id="PRO_1000069997" description="Tyrosine recombinase XerC">
    <location>
        <begin position="1"/>
        <end position="298"/>
    </location>
</feature>
<feature type="domain" description="Core-binding (CB)" evidence="3">
    <location>
        <begin position="1"/>
        <end position="83"/>
    </location>
</feature>
<feature type="domain" description="Tyr recombinase" evidence="2">
    <location>
        <begin position="104"/>
        <end position="283"/>
    </location>
</feature>
<feature type="active site" evidence="1">
    <location>
        <position position="144"/>
    </location>
</feature>
<feature type="active site" evidence="1">
    <location>
        <position position="166"/>
    </location>
</feature>
<feature type="active site" evidence="1">
    <location>
        <position position="235"/>
    </location>
</feature>
<feature type="active site" evidence="1">
    <location>
        <position position="238"/>
    </location>
</feature>
<feature type="active site" evidence="1">
    <location>
        <position position="261"/>
    </location>
</feature>
<feature type="active site" description="O-(3'-phospho-DNA)-tyrosine intermediate" evidence="1">
    <location>
        <position position="270"/>
    </location>
</feature>
<organism>
    <name type="scientific">Chromohalobacter salexigens (strain ATCC BAA-138 / DSM 3043 / CIP 106854 / NCIMB 13768 / 1H11)</name>
    <dbReference type="NCBI Taxonomy" id="290398"/>
    <lineage>
        <taxon>Bacteria</taxon>
        <taxon>Pseudomonadati</taxon>
        <taxon>Pseudomonadota</taxon>
        <taxon>Gammaproteobacteria</taxon>
        <taxon>Oceanospirillales</taxon>
        <taxon>Halomonadaceae</taxon>
        <taxon>Chromohalobacter</taxon>
    </lineage>
</organism>
<reference key="1">
    <citation type="journal article" date="2011" name="Stand. Genomic Sci.">
        <title>Complete genome sequence of the halophilic and highly halotolerant Chromohalobacter salexigens type strain (1H11(T)).</title>
        <authorList>
            <person name="Copeland A."/>
            <person name="O'Connor K."/>
            <person name="Lucas S."/>
            <person name="Lapidus A."/>
            <person name="Berry K.W."/>
            <person name="Detter J.C."/>
            <person name="Del Rio T.G."/>
            <person name="Hammon N."/>
            <person name="Dalin E."/>
            <person name="Tice H."/>
            <person name="Pitluck S."/>
            <person name="Bruce D."/>
            <person name="Goodwin L."/>
            <person name="Han C."/>
            <person name="Tapia R."/>
            <person name="Saunders E."/>
            <person name="Schmutz J."/>
            <person name="Brettin T."/>
            <person name="Larimer F."/>
            <person name="Land M."/>
            <person name="Hauser L."/>
            <person name="Vargas C."/>
            <person name="Nieto J.J."/>
            <person name="Kyrpides N.C."/>
            <person name="Ivanova N."/>
            <person name="Goker M."/>
            <person name="Klenk H.P."/>
            <person name="Csonka L.N."/>
            <person name="Woyke T."/>
        </authorList>
    </citation>
    <scope>NUCLEOTIDE SEQUENCE [LARGE SCALE GENOMIC DNA]</scope>
    <source>
        <strain>ATCC BAA-138 / DSM 3043 / CIP 106854 / NCIMB 13768 / 1H11</strain>
    </source>
</reference>
<comment type="function">
    <text evidence="1">Site-specific tyrosine recombinase, which acts by catalyzing the cutting and rejoining of the recombining DNA molecules. The XerC-XerD complex is essential to convert dimers of the bacterial chromosome into monomers to permit their segregation at cell division. It also contributes to the segregational stability of plasmids.</text>
</comment>
<comment type="subunit">
    <text evidence="1">Forms a cyclic heterotetrameric complex composed of two molecules of XerC and two molecules of XerD.</text>
</comment>
<comment type="subcellular location">
    <subcellularLocation>
        <location evidence="1">Cytoplasm</location>
    </subcellularLocation>
</comment>
<comment type="similarity">
    <text evidence="1">Belongs to the 'phage' integrase family. XerC subfamily.</text>
</comment>
<sequence length="298" mass="33523">MHAAVERFLHSLSGHASPATLDAYRRDLTALARFLEASGIDDWAALDVAQVRRFMGAERTRGLAPRSLARRRAALSRFADHLVRSGILDHNPVALTQTPRQPRHLPRPVDVDQLARFLDTPHDGTPLAVRDQAMLELFYSCGLRLAELTALDVTDLDARRLRVVGKGNKPRQMPIGRRAQAALADWYRLRGQLAGHDEPALFVGQRGARLGHRAVQKRLAQLARERGLAEHLHPHRLRHSFASHLLESSQDLRAVQELLGHANLSTTQVYTRLDWQHLADAYDQAHPRARRRAPPDDT</sequence>
<dbReference type="EMBL" id="CP000285">
    <property type="protein sequence ID" value="ABE60459.1"/>
    <property type="molecule type" value="Genomic_DNA"/>
</dbReference>
<dbReference type="RefSeq" id="WP_011508405.1">
    <property type="nucleotide sequence ID" value="NC_007963.1"/>
</dbReference>
<dbReference type="SMR" id="Q1QSU9"/>
<dbReference type="STRING" id="290398.Csal_3115"/>
<dbReference type="GeneID" id="95335810"/>
<dbReference type="KEGG" id="csa:Csal_3115"/>
<dbReference type="eggNOG" id="COG4973">
    <property type="taxonomic scope" value="Bacteria"/>
</dbReference>
<dbReference type="HOGENOM" id="CLU_027562_9_0_6"/>
<dbReference type="OrthoDB" id="9801717at2"/>
<dbReference type="Proteomes" id="UP000000239">
    <property type="component" value="Chromosome"/>
</dbReference>
<dbReference type="GO" id="GO:0005737">
    <property type="term" value="C:cytoplasm"/>
    <property type="evidence" value="ECO:0007669"/>
    <property type="project" value="UniProtKB-SubCell"/>
</dbReference>
<dbReference type="GO" id="GO:0003677">
    <property type="term" value="F:DNA binding"/>
    <property type="evidence" value="ECO:0007669"/>
    <property type="project" value="UniProtKB-KW"/>
</dbReference>
<dbReference type="GO" id="GO:0009037">
    <property type="term" value="F:tyrosine-based site-specific recombinase activity"/>
    <property type="evidence" value="ECO:0007669"/>
    <property type="project" value="UniProtKB-UniRule"/>
</dbReference>
<dbReference type="GO" id="GO:0051301">
    <property type="term" value="P:cell division"/>
    <property type="evidence" value="ECO:0007669"/>
    <property type="project" value="UniProtKB-KW"/>
</dbReference>
<dbReference type="GO" id="GO:0007059">
    <property type="term" value="P:chromosome segregation"/>
    <property type="evidence" value="ECO:0007669"/>
    <property type="project" value="UniProtKB-UniRule"/>
</dbReference>
<dbReference type="GO" id="GO:0006313">
    <property type="term" value="P:DNA transposition"/>
    <property type="evidence" value="ECO:0007669"/>
    <property type="project" value="UniProtKB-UniRule"/>
</dbReference>
<dbReference type="CDD" id="cd00798">
    <property type="entry name" value="INT_XerDC_C"/>
    <property type="match status" value="1"/>
</dbReference>
<dbReference type="Gene3D" id="1.10.150.130">
    <property type="match status" value="1"/>
</dbReference>
<dbReference type="Gene3D" id="1.10.443.10">
    <property type="entry name" value="Intergrase catalytic core"/>
    <property type="match status" value="1"/>
</dbReference>
<dbReference type="HAMAP" id="MF_01808">
    <property type="entry name" value="Recomb_XerC_XerD"/>
    <property type="match status" value="1"/>
</dbReference>
<dbReference type="InterPro" id="IPR044068">
    <property type="entry name" value="CB"/>
</dbReference>
<dbReference type="InterPro" id="IPR011010">
    <property type="entry name" value="DNA_brk_join_enz"/>
</dbReference>
<dbReference type="InterPro" id="IPR013762">
    <property type="entry name" value="Integrase-like_cat_sf"/>
</dbReference>
<dbReference type="InterPro" id="IPR002104">
    <property type="entry name" value="Integrase_catalytic"/>
</dbReference>
<dbReference type="InterPro" id="IPR010998">
    <property type="entry name" value="Integrase_recombinase_N"/>
</dbReference>
<dbReference type="InterPro" id="IPR004107">
    <property type="entry name" value="Integrase_SAM-like_N"/>
</dbReference>
<dbReference type="InterPro" id="IPR023009">
    <property type="entry name" value="Tyrosine_recombinase_XerC/XerD"/>
</dbReference>
<dbReference type="InterPro" id="IPR050090">
    <property type="entry name" value="Tyrosine_recombinase_XerCD"/>
</dbReference>
<dbReference type="PANTHER" id="PTHR30349">
    <property type="entry name" value="PHAGE INTEGRASE-RELATED"/>
    <property type="match status" value="1"/>
</dbReference>
<dbReference type="PANTHER" id="PTHR30349:SF81">
    <property type="entry name" value="TYROSINE RECOMBINASE XERC"/>
    <property type="match status" value="1"/>
</dbReference>
<dbReference type="Pfam" id="PF02899">
    <property type="entry name" value="Phage_int_SAM_1"/>
    <property type="match status" value="1"/>
</dbReference>
<dbReference type="Pfam" id="PF00589">
    <property type="entry name" value="Phage_integrase"/>
    <property type="match status" value="1"/>
</dbReference>
<dbReference type="SUPFAM" id="SSF56349">
    <property type="entry name" value="DNA breaking-rejoining enzymes"/>
    <property type="match status" value="1"/>
</dbReference>
<dbReference type="PROSITE" id="PS51900">
    <property type="entry name" value="CB"/>
    <property type="match status" value="1"/>
</dbReference>
<dbReference type="PROSITE" id="PS51898">
    <property type="entry name" value="TYR_RECOMBINASE"/>
    <property type="match status" value="1"/>
</dbReference>
<name>XERC_CHRSD</name>
<proteinExistence type="inferred from homology"/>
<evidence type="ECO:0000255" key="1">
    <source>
        <dbReference type="HAMAP-Rule" id="MF_01808"/>
    </source>
</evidence>
<evidence type="ECO:0000255" key="2">
    <source>
        <dbReference type="PROSITE-ProRule" id="PRU01246"/>
    </source>
</evidence>
<evidence type="ECO:0000255" key="3">
    <source>
        <dbReference type="PROSITE-ProRule" id="PRU01248"/>
    </source>
</evidence>
<keyword id="KW-0131">Cell cycle</keyword>
<keyword id="KW-0132">Cell division</keyword>
<keyword id="KW-0159">Chromosome partition</keyword>
<keyword id="KW-0963">Cytoplasm</keyword>
<keyword id="KW-0229">DNA integration</keyword>
<keyword id="KW-0233">DNA recombination</keyword>
<keyword id="KW-0238">DNA-binding</keyword>
<keyword id="KW-1185">Reference proteome</keyword>